<name>CAPP_BURM7</name>
<organism>
    <name type="scientific">Burkholderia mallei (strain NCTC 10247)</name>
    <dbReference type="NCBI Taxonomy" id="320389"/>
    <lineage>
        <taxon>Bacteria</taxon>
        <taxon>Pseudomonadati</taxon>
        <taxon>Pseudomonadota</taxon>
        <taxon>Betaproteobacteria</taxon>
        <taxon>Burkholderiales</taxon>
        <taxon>Burkholderiaceae</taxon>
        <taxon>Burkholderia</taxon>
        <taxon>pseudomallei group</taxon>
    </lineage>
</organism>
<gene>
    <name evidence="1" type="primary">ppc</name>
    <name type="ordered locus">BMA10247_1599</name>
</gene>
<protein>
    <recommendedName>
        <fullName evidence="1">Phosphoenolpyruvate carboxylase</fullName>
        <shortName evidence="1">PEPC</shortName>
        <shortName evidence="1">PEPCase</shortName>
        <ecNumber evidence="1">4.1.1.31</ecNumber>
    </recommendedName>
</protein>
<keyword id="KW-0120">Carbon dioxide fixation</keyword>
<keyword id="KW-0456">Lyase</keyword>
<keyword id="KW-0460">Magnesium</keyword>
<sequence>MKSSGSARATRRNAVSSSSAPAHAEPPARRAAKPARKLDGAAARPLAPTNAASAKPQGRTREDKDRPLFEDIRYLGRLLGDVVREQEGDAVFDVVETIRQTAVKFRREDDKAAAQTLEKMLRKLTPEQTVSVVRAFSYFSHLANIAEDRHHNRRRRIHALAGSAAQAGTVAYALDKLKQAGDASSKTIKQFFEGALIVPVLTAHPTEVQRKSILDAQHDIARLLAERDQPLTARELAHNEALLRARVTTLWQTRMLRDARLTVADEIENALSYYRATFLDELPALYADIEEALAEHGLRARVPAFFQMGSWIGGDRDGNPNVTAATLDEAISRQAAVIFEHYLEQVHKLGAELSVSNLLVGASDALKALAAASPDQSPHRVDEPYRRALIGVYTRLAASARVRLGEGTVPVRSAGRGAAPVRATPYADAEEFAADLRVLTDSLALHHGESLATPRLAPLMRAAEVFGFHLASIDLRQSSDIHEAVVAELLARGGVEADYAALPEADKLRVLLAALADPRPLRSPYLDYSDLAKSELGVLERAHAIRAQFGARAVRNYIISHTETVSDLVEVLLLQKETGLFEGTLGTPHANARNGLMVIPLFETIADLRNASDIMRAFFALPGVGELLAHQGHEQEVMLGYSDSNKDGGFLTSNWELYRAELALVDLFDERGIKLRLFHGRGGTVGRGGGPTYQAILSQPPGTVNGQIRLTEQGEVIASKFANPEIGRRNLETVVAATLEATLAPHSNAPKQLPAFEAAMQTLSDAAMASYRALVYETPGFTDYFFSSTPITEIAELNIGSRPASRKLQDPKNRKIEDLRAIPWGFSWGQCRLLLTGWYGFGSAVAAYLDGAPDAAERGKRVALLKKMNKTWPFFANLLSNMDMVLAKTDLAVASRYAQLVADKKLRKHVFERIVAEWHRTADALAEITGAHARLAANPLLARSIKNRFPYLDPLNHLQVELIKRHRAGDTNARLRRGIHLTINGIAAGLRNTG</sequence>
<evidence type="ECO:0000255" key="1">
    <source>
        <dbReference type="HAMAP-Rule" id="MF_00595"/>
    </source>
</evidence>
<evidence type="ECO:0000256" key="2">
    <source>
        <dbReference type="SAM" id="MobiDB-lite"/>
    </source>
</evidence>
<reference key="1">
    <citation type="journal article" date="2010" name="Genome Biol. Evol.">
        <title>Continuing evolution of Burkholderia mallei through genome reduction and large-scale rearrangements.</title>
        <authorList>
            <person name="Losada L."/>
            <person name="Ronning C.M."/>
            <person name="DeShazer D."/>
            <person name="Woods D."/>
            <person name="Fedorova N."/>
            <person name="Kim H.S."/>
            <person name="Shabalina S.A."/>
            <person name="Pearson T.R."/>
            <person name="Brinkac L."/>
            <person name="Tan P."/>
            <person name="Nandi T."/>
            <person name="Crabtree J."/>
            <person name="Badger J."/>
            <person name="Beckstrom-Sternberg S."/>
            <person name="Saqib M."/>
            <person name="Schutzer S.E."/>
            <person name="Keim P."/>
            <person name="Nierman W.C."/>
        </authorList>
    </citation>
    <scope>NUCLEOTIDE SEQUENCE [LARGE SCALE GENOMIC DNA]</scope>
    <source>
        <strain>NCTC 10247</strain>
    </source>
</reference>
<feature type="chain" id="PRO_1000025549" description="Phosphoenolpyruvate carboxylase">
    <location>
        <begin position="1"/>
        <end position="994"/>
    </location>
</feature>
<feature type="region of interest" description="Disordered" evidence="2">
    <location>
        <begin position="1"/>
        <end position="66"/>
    </location>
</feature>
<feature type="compositionally biased region" description="Low complexity" evidence="2">
    <location>
        <begin position="14"/>
        <end position="25"/>
    </location>
</feature>
<feature type="compositionally biased region" description="Low complexity" evidence="2">
    <location>
        <begin position="41"/>
        <end position="54"/>
    </location>
</feature>
<feature type="active site" evidence="1">
    <location>
        <position position="204"/>
    </location>
</feature>
<feature type="active site" evidence="1">
    <location>
        <position position="646"/>
    </location>
</feature>
<dbReference type="EC" id="4.1.1.31" evidence="1"/>
<dbReference type="EMBL" id="CP000548">
    <property type="protein sequence ID" value="ABO07069.1"/>
    <property type="molecule type" value="Genomic_DNA"/>
</dbReference>
<dbReference type="RefSeq" id="WP_004191560.1">
    <property type="nucleotide sequence ID" value="NZ_CP007802.1"/>
</dbReference>
<dbReference type="SMR" id="A3MLK7"/>
<dbReference type="GeneID" id="93059514"/>
<dbReference type="KEGG" id="bmaz:BM44_1573"/>
<dbReference type="KEGG" id="bmn:BMA10247_1599"/>
<dbReference type="PATRIC" id="fig|320389.8.peg.1757"/>
<dbReference type="GO" id="GO:0005829">
    <property type="term" value="C:cytosol"/>
    <property type="evidence" value="ECO:0007669"/>
    <property type="project" value="TreeGrafter"/>
</dbReference>
<dbReference type="GO" id="GO:0000287">
    <property type="term" value="F:magnesium ion binding"/>
    <property type="evidence" value="ECO:0007669"/>
    <property type="project" value="UniProtKB-UniRule"/>
</dbReference>
<dbReference type="GO" id="GO:0008964">
    <property type="term" value="F:phosphoenolpyruvate carboxylase activity"/>
    <property type="evidence" value="ECO:0007669"/>
    <property type="project" value="UniProtKB-UniRule"/>
</dbReference>
<dbReference type="GO" id="GO:0015977">
    <property type="term" value="P:carbon fixation"/>
    <property type="evidence" value="ECO:0007669"/>
    <property type="project" value="UniProtKB-UniRule"/>
</dbReference>
<dbReference type="GO" id="GO:0006107">
    <property type="term" value="P:oxaloacetate metabolic process"/>
    <property type="evidence" value="ECO:0007669"/>
    <property type="project" value="UniProtKB-UniRule"/>
</dbReference>
<dbReference type="GO" id="GO:0006099">
    <property type="term" value="P:tricarboxylic acid cycle"/>
    <property type="evidence" value="ECO:0007669"/>
    <property type="project" value="InterPro"/>
</dbReference>
<dbReference type="Gene3D" id="1.20.1440.90">
    <property type="entry name" value="Phosphoenolpyruvate/pyruvate domain"/>
    <property type="match status" value="1"/>
</dbReference>
<dbReference type="HAMAP" id="MF_00595">
    <property type="entry name" value="PEPcase_type1"/>
    <property type="match status" value="1"/>
</dbReference>
<dbReference type="InterPro" id="IPR021135">
    <property type="entry name" value="PEP_COase"/>
</dbReference>
<dbReference type="InterPro" id="IPR022805">
    <property type="entry name" value="PEP_COase_bac/pln-type"/>
</dbReference>
<dbReference type="InterPro" id="IPR018129">
    <property type="entry name" value="PEP_COase_Lys_AS"/>
</dbReference>
<dbReference type="InterPro" id="IPR033129">
    <property type="entry name" value="PEPCASE_His_AS"/>
</dbReference>
<dbReference type="InterPro" id="IPR015813">
    <property type="entry name" value="Pyrv/PenolPyrv_kinase-like_dom"/>
</dbReference>
<dbReference type="NCBIfam" id="NF000584">
    <property type="entry name" value="PRK00009.1"/>
    <property type="match status" value="1"/>
</dbReference>
<dbReference type="PANTHER" id="PTHR30523">
    <property type="entry name" value="PHOSPHOENOLPYRUVATE CARBOXYLASE"/>
    <property type="match status" value="1"/>
</dbReference>
<dbReference type="PANTHER" id="PTHR30523:SF6">
    <property type="entry name" value="PHOSPHOENOLPYRUVATE CARBOXYLASE"/>
    <property type="match status" value="1"/>
</dbReference>
<dbReference type="Pfam" id="PF00311">
    <property type="entry name" value="PEPcase"/>
    <property type="match status" value="1"/>
</dbReference>
<dbReference type="PRINTS" id="PR00150">
    <property type="entry name" value="PEPCARBXLASE"/>
</dbReference>
<dbReference type="SUPFAM" id="SSF51621">
    <property type="entry name" value="Phosphoenolpyruvate/pyruvate domain"/>
    <property type="match status" value="1"/>
</dbReference>
<dbReference type="PROSITE" id="PS00781">
    <property type="entry name" value="PEPCASE_1"/>
    <property type="match status" value="1"/>
</dbReference>
<dbReference type="PROSITE" id="PS00393">
    <property type="entry name" value="PEPCASE_2"/>
    <property type="match status" value="1"/>
</dbReference>
<accession>A3MLK7</accession>
<comment type="function">
    <text evidence="1">Forms oxaloacetate, a four-carbon dicarboxylic acid source for the tricarboxylic acid cycle.</text>
</comment>
<comment type="catalytic activity">
    <reaction evidence="1">
        <text>oxaloacetate + phosphate = phosphoenolpyruvate + hydrogencarbonate</text>
        <dbReference type="Rhea" id="RHEA:28370"/>
        <dbReference type="ChEBI" id="CHEBI:16452"/>
        <dbReference type="ChEBI" id="CHEBI:17544"/>
        <dbReference type="ChEBI" id="CHEBI:43474"/>
        <dbReference type="ChEBI" id="CHEBI:58702"/>
        <dbReference type="EC" id="4.1.1.31"/>
    </reaction>
</comment>
<comment type="cofactor">
    <cofactor evidence="1">
        <name>Mg(2+)</name>
        <dbReference type="ChEBI" id="CHEBI:18420"/>
    </cofactor>
</comment>
<comment type="similarity">
    <text evidence="1">Belongs to the PEPCase type 1 family.</text>
</comment>
<proteinExistence type="inferred from homology"/>